<organism>
    <name type="scientific">Bacillus subtilis</name>
    <dbReference type="NCBI Taxonomy" id="1423"/>
    <lineage>
        <taxon>Bacteria</taxon>
        <taxon>Bacillati</taxon>
        <taxon>Bacillota</taxon>
        <taxon>Bacilli</taxon>
        <taxon>Bacillales</taxon>
        <taxon>Bacillaceae</taxon>
        <taxon>Bacillus</taxon>
    </lineage>
</organism>
<name>LICA_BACIU</name>
<feature type="peptide" id="PRO_0000044152" description="Subpeptin JM4-A">
    <location>
        <begin position="1"/>
        <end position="12"/>
    </location>
</feature>
<reference key="1">
    <citation type="journal article" date="2005" name="Curr. Microbiol.">
        <title>Purification and characterization of two novel antimicrobial peptides Subpeptin JM4-A and Subpeptin JM4-B produced by Bacillus subtilis JM4.</title>
        <authorList>
            <person name="Wu S.-M."/>
            <person name="Jia S.-F."/>
            <person name="Sun D.-D."/>
            <person name="Chen M.-L."/>
            <person name="Chen X."/>
            <person name="Zhong J."/>
            <person name="Huan L.-D."/>
        </authorList>
    </citation>
    <scope>PROTEIN SEQUENCE</scope>
    <scope>FUNCTION</scope>
    <scope>SUBUNIT</scope>
    <scope>SUBCELLULAR LOCATION</scope>
    <scope>DEVELOPMENTAL STAGE</scope>
    <scope>MASS SPECTROMETRY</scope>
    <source>
        <strain>JM4</strain>
    </source>
</reference>
<keyword id="KW-0044">Antibiotic</keyword>
<keyword id="KW-0929">Antimicrobial</keyword>
<keyword id="KW-0078">Bacteriocin</keyword>
<keyword id="KW-0903">Direct protein sequencing</keyword>
<keyword id="KW-0964">Secreted</keyword>
<sequence>XXKEIXWIFHDN</sequence>
<dbReference type="GO" id="GO:0005576">
    <property type="term" value="C:extracellular region"/>
    <property type="evidence" value="ECO:0007669"/>
    <property type="project" value="UniProtKB-SubCell"/>
</dbReference>
<dbReference type="GO" id="GO:0042742">
    <property type="term" value="P:defense response to bacterium"/>
    <property type="evidence" value="ECO:0007669"/>
    <property type="project" value="UniProtKB-KW"/>
</dbReference>
<dbReference type="GO" id="GO:0031640">
    <property type="term" value="P:killing of cells of another organism"/>
    <property type="evidence" value="ECO:0007669"/>
    <property type="project" value="UniProtKB-KW"/>
</dbReference>
<proteinExistence type="evidence at protein level"/>
<protein>
    <recommendedName>
        <fullName>Subpeptin JM4-A</fullName>
    </recommendedName>
</protein>
<evidence type="ECO:0000269" key="1">
    <source>
    </source>
</evidence>
<comment type="function">
    <text evidence="1">Has antibacterial activity against Gram-positive and Gram-negative bacteria including Salmonella, B.cereus, B.megaterium, L.casei, L.viridescens, M.flavus, C.glutamicum, C.crenatum, L.mesenteroides and E.faecalis.</text>
</comment>
<comment type="biophysicochemical properties">
    <phDependence>
        <text>Active from pH 2.0 to 8.0. Retains some activity up to pH 12.0.</text>
    </phDependence>
    <temperatureDependence>
        <text>Active from 20 to 100 degrees Celsius.</text>
    </temperatureDependence>
</comment>
<comment type="subunit">
    <text evidence="1">Monomer.</text>
</comment>
<comment type="subcellular location">
    <subcellularLocation>
        <location evidence="1">Secreted</location>
    </subcellularLocation>
</comment>
<comment type="developmental stage">
    <text evidence="1">Expressed from the mid-exponential phase, maximum activity is reached at the stationary phase.</text>
</comment>
<comment type="mass spectrometry"/>
<accession>P83878</accession>